<keyword id="KW-0001">2Fe-2S</keyword>
<keyword id="KW-0963">Cytoplasm</keyword>
<keyword id="KW-0249">Electron transport</keyword>
<keyword id="KW-0408">Iron</keyword>
<keyword id="KW-0411">Iron-sulfur</keyword>
<keyword id="KW-0479">Metal-binding</keyword>
<keyword id="KW-0560">Oxidoreductase</keyword>
<keyword id="KW-1185">Reference proteome</keyword>
<keyword id="KW-0813">Transport</keyword>
<dbReference type="EC" id="1.14.18.2" evidence="1"/>
<dbReference type="EMBL" id="AF074481">
    <property type="protein sequence ID" value="AAC68882.1"/>
    <property type="molecule type" value="mRNA"/>
</dbReference>
<dbReference type="RefSeq" id="NP_001009041.1">
    <property type="nucleotide sequence ID" value="NM_001009041.1"/>
</dbReference>
<dbReference type="STRING" id="9598.ENSPTRP00000030365"/>
<dbReference type="PaxDb" id="9598-ENSPTRP00000030365"/>
<dbReference type="GeneID" id="450121"/>
<dbReference type="KEGG" id="ptr:450121"/>
<dbReference type="CTD" id="12763"/>
<dbReference type="eggNOG" id="ENOG502QR0M">
    <property type="taxonomic scope" value="Eukaryota"/>
</dbReference>
<dbReference type="HOGENOM" id="CLU_034056_0_0_1"/>
<dbReference type="InParanoid" id="O97598"/>
<dbReference type="TreeFam" id="TF331273"/>
<dbReference type="UniPathway" id="UPA00628"/>
<dbReference type="Proteomes" id="UP000002277">
    <property type="component" value="Unplaced"/>
</dbReference>
<dbReference type="GO" id="GO:0005737">
    <property type="term" value="C:cytoplasm"/>
    <property type="evidence" value="ECO:0000318"/>
    <property type="project" value="GO_Central"/>
</dbReference>
<dbReference type="GO" id="GO:0051537">
    <property type="term" value="F:2 iron, 2 sulfur cluster binding"/>
    <property type="evidence" value="ECO:0007669"/>
    <property type="project" value="UniProtKB-KW"/>
</dbReference>
<dbReference type="GO" id="GO:0030338">
    <property type="term" value="F:CMP-N-acetylneuraminate monooxygenase activity"/>
    <property type="evidence" value="ECO:0000318"/>
    <property type="project" value="GO_Central"/>
</dbReference>
<dbReference type="GO" id="GO:0046872">
    <property type="term" value="F:metal ion binding"/>
    <property type="evidence" value="ECO:0007669"/>
    <property type="project" value="UniProtKB-KW"/>
</dbReference>
<dbReference type="GO" id="GO:0046381">
    <property type="term" value="P:CMP-N-acetylneuraminate metabolic process"/>
    <property type="evidence" value="ECO:0000318"/>
    <property type="project" value="GO_Central"/>
</dbReference>
<dbReference type="GO" id="GO:0006054">
    <property type="term" value="P:N-acetylneuraminate metabolic process"/>
    <property type="evidence" value="ECO:0007669"/>
    <property type="project" value="UniProtKB-UniPathway"/>
</dbReference>
<dbReference type="CDD" id="cd03473">
    <property type="entry name" value="Rieske_CMP_Neu5Ac_hydrolase_N"/>
    <property type="match status" value="1"/>
</dbReference>
<dbReference type="FunFam" id="3.60.15.10:FF:000025">
    <property type="entry name" value="Inactive cytidine monophosphate-N-acetylneuraminic acid hydroxylase"/>
    <property type="match status" value="1"/>
</dbReference>
<dbReference type="Gene3D" id="3.60.15.10">
    <property type="entry name" value="Ribonuclease Z/Hydroxyacylglutathione hydrolase-like"/>
    <property type="match status" value="1"/>
</dbReference>
<dbReference type="Gene3D" id="2.102.10.10">
    <property type="entry name" value="Rieske [2Fe-2S] iron-sulphur domain"/>
    <property type="match status" value="1"/>
</dbReference>
<dbReference type="InterPro" id="IPR037339">
    <property type="entry name" value="CMP-Neu5Ac_hydroxylase_Rieske"/>
</dbReference>
<dbReference type="InterPro" id="IPR027033">
    <property type="entry name" value="Cnh"/>
</dbReference>
<dbReference type="InterPro" id="IPR036866">
    <property type="entry name" value="RibonucZ/Hydroxyglut_hydro"/>
</dbReference>
<dbReference type="InterPro" id="IPR017941">
    <property type="entry name" value="Rieske_2Fe-2S"/>
</dbReference>
<dbReference type="InterPro" id="IPR036922">
    <property type="entry name" value="Rieske_2Fe-2S_sf"/>
</dbReference>
<dbReference type="PANTHER" id="PTHR46522">
    <property type="entry name" value="CYTIDINE MONOPHOSPHATE-N-ACETYLNEURAMINIC ACID HYDROXYLASE"/>
    <property type="match status" value="1"/>
</dbReference>
<dbReference type="PANTHER" id="PTHR46522:SF1">
    <property type="entry name" value="INACTIVE CYTIDINE MONOPHOSPHATE-N-ACETYLNEURAMINIC ACID HYDROXYLASE"/>
    <property type="match status" value="1"/>
</dbReference>
<dbReference type="Pfam" id="PF13483">
    <property type="entry name" value="Lactamase_B_3"/>
    <property type="match status" value="1"/>
</dbReference>
<dbReference type="Pfam" id="PF00355">
    <property type="entry name" value="Rieske"/>
    <property type="match status" value="1"/>
</dbReference>
<dbReference type="SUPFAM" id="SSF50022">
    <property type="entry name" value="ISP domain"/>
    <property type="match status" value="1"/>
</dbReference>
<dbReference type="SUPFAM" id="SSF56281">
    <property type="entry name" value="Metallo-hydrolase/oxidoreductase"/>
    <property type="match status" value="1"/>
</dbReference>
<dbReference type="PROSITE" id="PS51296">
    <property type="entry name" value="RIESKE"/>
    <property type="match status" value="1"/>
</dbReference>
<name>CMAH_PANTR</name>
<protein>
    <recommendedName>
        <fullName>Cytidine monophosphate-N-acetylneuraminic acid hydroxylase</fullName>
        <shortName>CMP-N-acetylneuraminic acid hydroxylase</shortName>
        <ecNumber evidence="1">1.14.18.2</ecNumber>
    </recommendedName>
    <alternativeName>
        <fullName>CMP-N-acetylneuraminate monooxygenase</fullName>
    </alternativeName>
    <alternativeName>
        <fullName>CMP-Neu5Ac hydroxylase</fullName>
    </alternativeName>
    <alternativeName>
        <fullName>CMP-NeuAc hydroxylase</fullName>
    </alternativeName>
</protein>
<accession>O97598</accession>
<feature type="chain" id="PRO_0000127804" description="Cytidine monophosphate-N-acetylneuraminic acid hydroxylase">
    <location>
        <begin position="1"/>
        <end position="590"/>
    </location>
</feature>
<feature type="domain" description="Rieske" evidence="2">
    <location>
        <begin position="14"/>
        <end position="112"/>
    </location>
</feature>
<feature type="binding site" evidence="2">
    <location>
        <position position="54"/>
    </location>
    <ligand>
        <name>[2Fe-2S] cluster</name>
        <dbReference type="ChEBI" id="CHEBI:190135"/>
    </ligand>
</feature>
<feature type="binding site" evidence="2">
    <location>
        <position position="56"/>
    </location>
    <ligand>
        <name>[2Fe-2S] cluster</name>
        <dbReference type="ChEBI" id="CHEBI:190135"/>
    </ligand>
</feature>
<feature type="binding site" evidence="2">
    <location>
        <position position="75"/>
    </location>
    <ligand>
        <name>[2Fe-2S] cluster</name>
        <dbReference type="ChEBI" id="CHEBI:190135"/>
    </ligand>
</feature>
<feature type="binding site" evidence="2">
    <location>
        <position position="78"/>
    </location>
    <ligand>
        <name>[2Fe-2S] cluster</name>
        <dbReference type="ChEBI" id="CHEBI:190135"/>
    </ligand>
</feature>
<sequence length="590" mass="68448">MGSIEQTTEILLCLSPVEVASLKEGINFFRNKSTGKDYILYKNKSRLRACKNMCKHQGGLFIKDIEDLAGRSVRCTKHNWKLDVSTMKYINPPESFCQDELVVEMDENNRLLLLELNPPNPWDLQPRSPEELAFGEVQITYLTHACMDLKLGDKRMVFDPWLIGPAFARGWWLLHEPPSDWLERLCQADLIYISHLHSDHLSYPTLKKLAGRRPDIPIYVGNTERPVFWNLNQSGVQLTNINVVPFGIWQQVDKNLRFMILMDGVHPEMDTCIIVEYKGHKILNTVDCTRPNGGRLPMKVALMMSDFAGGASGFPMTFSGGKFTEEWKAQFIKTERKKLLNYKARLVKNLQPRIYCPFAGYFVESHPSDKYIKETNTKNDPNELNNLIKKNSDVITWTPRPGATLDLGRMLKDPTDSKGIIEPPEGTKIYKDSWDFEPYLEILNAAVGDEIFLHSSWIKEYFTWAGFKDYNLVVRMIETDEDFNPFPGGYDYLVDFLDLSFPKERPQREHPYEEIHSRVDVIRHVVKNGLLWDELYIGFQTRLQRDPDIYHHLFWNHFQIKLPLTPPNWKSFLMCCEQNGPGILQECKTT</sequence>
<comment type="function">
    <text evidence="3">Sialic acids are components of carbohydrate chains of glycoconjugates and are involved in cell-cell recognition and cell-pathogen interactions. Catalyzes the conversion of CMP-N-acetylneuraminic acid (CMP-Neu5Ac) into its hydroxylated derivative CMP-N-glycolylneuraminic acid (CMP-Neu5Gc), a sialic acid abundantly expressed at the surface of many cells.</text>
</comment>
<comment type="catalytic activity">
    <reaction evidence="1">
        <text>CMP-N-acetyl-beta-neuraminate + 2 Fe(II)-[cytochrome b5] + O2 + 2 H(+) = CMP-N-glycoloyl-beta-neuraminate + 2 Fe(III)-[cytochrome b5] + H2O</text>
        <dbReference type="Rhea" id="RHEA:16145"/>
        <dbReference type="Rhea" id="RHEA-COMP:10438"/>
        <dbReference type="Rhea" id="RHEA-COMP:10439"/>
        <dbReference type="ChEBI" id="CHEBI:15377"/>
        <dbReference type="ChEBI" id="CHEBI:15378"/>
        <dbReference type="ChEBI" id="CHEBI:15379"/>
        <dbReference type="ChEBI" id="CHEBI:29033"/>
        <dbReference type="ChEBI" id="CHEBI:29034"/>
        <dbReference type="ChEBI" id="CHEBI:57812"/>
        <dbReference type="ChEBI" id="CHEBI:58376"/>
        <dbReference type="EC" id="1.14.18.2"/>
    </reaction>
</comment>
<comment type="cofactor">
    <cofactor evidence="2">
        <name>[2Fe-2S] cluster</name>
        <dbReference type="ChEBI" id="CHEBI:190135"/>
    </cofactor>
    <text evidence="2">Binds 1 [2Fe-2S] cluster per subunit.</text>
</comment>
<comment type="pathway">
    <text>Amino-sugar metabolism; N-acetylneuraminate metabolism.</text>
</comment>
<comment type="subcellular location">
    <subcellularLocation>
        <location evidence="1">Cytoplasm</location>
    </subcellularLocation>
</comment>
<comment type="similarity">
    <text evidence="5">Belongs to the CMP-Neu5Ac hydroxylase family.</text>
</comment>
<reference key="1">
    <citation type="journal article" date="1998" name="Proc. Natl. Acad. Sci. U.S.A.">
        <title>A mutation in human CMP-sialic acid hydroxylase occurred after the Homo-Pan divergence.</title>
        <authorList>
            <person name="Chou H.-H."/>
            <person name="Takematsu H."/>
            <person name="Diaz S."/>
            <person name="Iber J."/>
            <person name="Nickerson E."/>
            <person name="Wright K.L."/>
            <person name="Muchmore E.A."/>
            <person name="Nelson D.L."/>
            <person name="Warren S.T."/>
            <person name="Varki A."/>
        </authorList>
    </citation>
    <scope>NUCLEOTIDE SEQUENCE [MRNA]</scope>
</reference>
<reference key="2">
    <citation type="journal article" date="2016" name="Nat. Commun.">
        <title>Ancient human sialic acid variant restricts an emerging zoonotic malaria parasite.</title>
        <authorList>
            <person name="Dankwa S."/>
            <person name="Lim C."/>
            <person name="Bei A.K."/>
            <person name="Jiang R.H."/>
            <person name="Abshire J.R."/>
            <person name="Patel S.D."/>
            <person name="Goldberg J.M."/>
            <person name="Moreno Y."/>
            <person name="Kono M."/>
            <person name="Niles J.C."/>
            <person name="Duraisingh M.T."/>
        </authorList>
    </citation>
    <scope>FUNCTION</scope>
</reference>
<gene>
    <name evidence="4" type="primary">CMAH</name>
</gene>
<organism>
    <name type="scientific">Pan troglodytes</name>
    <name type="common">Chimpanzee</name>
    <dbReference type="NCBI Taxonomy" id="9598"/>
    <lineage>
        <taxon>Eukaryota</taxon>
        <taxon>Metazoa</taxon>
        <taxon>Chordata</taxon>
        <taxon>Craniata</taxon>
        <taxon>Vertebrata</taxon>
        <taxon>Euteleostomi</taxon>
        <taxon>Mammalia</taxon>
        <taxon>Eutheria</taxon>
        <taxon>Euarchontoglires</taxon>
        <taxon>Primates</taxon>
        <taxon>Haplorrhini</taxon>
        <taxon>Catarrhini</taxon>
        <taxon>Hominidae</taxon>
        <taxon>Pan</taxon>
    </lineage>
</organism>
<evidence type="ECO:0000250" key="1">
    <source>
        <dbReference type="UniProtKB" id="Q61419"/>
    </source>
</evidence>
<evidence type="ECO:0000255" key="2">
    <source>
        <dbReference type="PROSITE-ProRule" id="PRU00628"/>
    </source>
</evidence>
<evidence type="ECO:0000269" key="3">
    <source>
    </source>
</evidence>
<evidence type="ECO:0000303" key="4">
    <source>
    </source>
</evidence>
<evidence type="ECO:0000305" key="5"/>
<proteinExistence type="evidence at transcript level"/>